<accession>P80772</accession>
<proteinExistence type="evidence at protein level"/>
<feature type="chain" id="PRO_0000079670" description="33 kDa cell wall protein">
    <location>
        <begin position="1"/>
        <end position="12" status="greater than"/>
    </location>
</feature>
<feature type="non-terminal residue" evidence="2">
    <location>
        <position position="12"/>
    </location>
</feature>
<organism>
    <name type="scientific">Phaseolus vulgaris</name>
    <name type="common">Kidney bean</name>
    <name type="synonym">French bean</name>
    <dbReference type="NCBI Taxonomy" id="3885"/>
    <lineage>
        <taxon>Eukaryota</taxon>
        <taxon>Viridiplantae</taxon>
        <taxon>Streptophyta</taxon>
        <taxon>Embryophyta</taxon>
        <taxon>Tracheophyta</taxon>
        <taxon>Spermatophyta</taxon>
        <taxon>Magnoliopsida</taxon>
        <taxon>eudicotyledons</taxon>
        <taxon>Gunneridae</taxon>
        <taxon>Pentapetalae</taxon>
        <taxon>rosids</taxon>
        <taxon>fabids</taxon>
        <taxon>Fabales</taxon>
        <taxon>Fabaceae</taxon>
        <taxon>Papilionoideae</taxon>
        <taxon>50 kb inversion clade</taxon>
        <taxon>NPAAA clade</taxon>
        <taxon>indigoferoid/millettioid clade</taxon>
        <taxon>Phaseoleae</taxon>
        <taxon>Phaseolus</taxon>
    </lineage>
</organism>
<dbReference type="GO" id="GO:0005576">
    <property type="term" value="C:extracellular region"/>
    <property type="evidence" value="ECO:0007669"/>
    <property type="project" value="UniProtKB-KW"/>
</dbReference>
<protein>
    <recommendedName>
        <fullName>33 kDa cell wall protein</fullName>
    </recommendedName>
</protein>
<name>CWP13_PHAVU</name>
<sequence length="12" mass="1519">NYDKNFYEDTLP</sequence>
<keyword id="KW-0134">Cell wall</keyword>
<keyword id="KW-0903">Direct protein sequencing</keyword>
<keyword id="KW-0964">Secreted</keyword>
<evidence type="ECO:0000269" key="1">
    <source>
    </source>
</evidence>
<evidence type="ECO:0000303" key="2">
    <source>
    </source>
</evidence>
<evidence type="ECO:0000305" key="3"/>
<comment type="subcellular location">
    <subcellularLocation>
        <location evidence="1">Secreted</location>
        <location evidence="1">Cell wall</location>
    </subcellularLocation>
</comment>
<reference evidence="3" key="1">
    <citation type="journal article" date="1997" name="J. Biol. Chem.">
        <title>Differential extraction and protein sequencing reveals major differences in patterns of primary cell wall proteins from plants.</title>
        <authorList>
            <person name="Robertson D."/>
            <person name="Mitchell G.P."/>
            <person name="Gilroy J.S."/>
            <person name="Gerrish C."/>
            <person name="Bolwell G.P."/>
            <person name="Slabas A.R."/>
        </authorList>
    </citation>
    <scope>PROTEIN SEQUENCE</scope>
    <scope>SUBCELLULAR LOCATION</scope>
</reference>